<reference key="1">
    <citation type="journal article" date="2005" name="Nature">
        <title>The genome of the social amoeba Dictyostelium discoideum.</title>
        <authorList>
            <person name="Eichinger L."/>
            <person name="Pachebat J.A."/>
            <person name="Gloeckner G."/>
            <person name="Rajandream M.A."/>
            <person name="Sucgang R."/>
            <person name="Berriman M."/>
            <person name="Song J."/>
            <person name="Olsen R."/>
            <person name="Szafranski K."/>
            <person name="Xu Q."/>
            <person name="Tunggal B."/>
            <person name="Kummerfeld S."/>
            <person name="Madera M."/>
            <person name="Konfortov B.A."/>
            <person name="Rivero F."/>
            <person name="Bankier A.T."/>
            <person name="Lehmann R."/>
            <person name="Hamlin N."/>
            <person name="Davies R."/>
            <person name="Gaudet P."/>
            <person name="Fey P."/>
            <person name="Pilcher K."/>
            <person name="Chen G."/>
            <person name="Saunders D."/>
            <person name="Sodergren E.J."/>
            <person name="Davis P."/>
            <person name="Kerhornou A."/>
            <person name="Nie X."/>
            <person name="Hall N."/>
            <person name="Anjard C."/>
            <person name="Hemphill L."/>
            <person name="Bason N."/>
            <person name="Farbrother P."/>
            <person name="Desany B."/>
            <person name="Just E."/>
            <person name="Morio T."/>
            <person name="Rost R."/>
            <person name="Churcher C.M."/>
            <person name="Cooper J."/>
            <person name="Haydock S."/>
            <person name="van Driessche N."/>
            <person name="Cronin A."/>
            <person name="Goodhead I."/>
            <person name="Muzny D.M."/>
            <person name="Mourier T."/>
            <person name="Pain A."/>
            <person name="Lu M."/>
            <person name="Harper D."/>
            <person name="Lindsay R."/>
            <person name="Hauser H."/>
            <person name="James K.D."/>
            <person name="Quiles M."/>
            <person name="Madan Babu M."/>
            <person name="Saito T."/>
            <person name="Buchrieser C."/>
            <person name="Wardroper A."/>
            <person name="Felder M."/>
            <person name="Thangavelu M."/>
            <person name="Johnson D."/>
            <person name="Knights A."/>
            <person name="Loulseged H."/>
            <person name="Mungall K.L."/>
            <person name="Oliver K."/>
            <person name="Price C."/>
            <person name="Quail M.A."/>
            <person name="Urushihara H."/>
            <person name="Hernandez J."/>
            <person name="Rabbinowitsch E."/>
            <person name="Steffen D."/>
            <person name="Sanders M."/>
            <person name="Ma J."/>
            <person name="Kohara Y."/>
            <person name="Sharp S."/>
            <person name="Simmonds M.N."/>
            <person name="Spiegler S."/>
            <person name="Tivey A."/>
            <person name="Sugano S."/>
            <person name="White B."/>
            <person name="Walker D."/>
            <person name="Woodward J.R."/>
            <person name="Winckler T."/>
            <person name="Tanaka Y."/>
            <person name="Shaulsky G."/>
            <person name="Schleicher M."/>
            <person name="Weinstock G.M."/>
            <person name="Rosenthal A."/>
            <person name="Cox E.C."/>
            <person name="Chisholm R.L."/>
            <person name="Gibbs R.A."/>
            <person name="Loomis W.F."/>
            <person name="Platzer M."/>
            <person name="Kay R.R."/>
            <person name="Williams J.G."/>
            <person name="Dear P.H."/>
            <person name="Noegel A.A."/>
            <person name="Barrell B.G."/>
            <person name="Kuspa A."/>
        </authorList>
    </citation>
    <scope>NUCLEOTIDE SEQUENCE [LARGE SCALE GENOMIC DNA]</scope>
    <source>
        <strain>AX4</strain>
    </source>
</reference>
<reference key="2">
    <citation type="journal article" date="2006" name="Mol. Cell. Proteomics">
        <title>Proteomics fingerprinting of phagosome maturation and evidence for the role of a Galpha during uptake.</title>
        <authorList>
            <person name="Gotthardt D."/>
            <person name="Blancheteau V."/>
            <person name="Bosserhoff A."/>
            <person name="Ruppert T."/>
            <person name="Delorenzi M."/>
            <person name="Soldati T."/>
        </authorList>
    </citation>
    <scope>IDENTIFICATION BY MASS SPECTROMETRY [LARGE SCALE ANALYSIS]</scope>
    <source>
        <strain>AX2</strain>
    </source>
</reference>
<keyword id="KW-0066">ATP synthesis</keyword>
<keyword id="KW-0139">CF(1)</keyword>
<keyword id="KW-0375">Hydrogen ion transport</keyword>
<keyword id="KW-0406">Ion transport</keyword>
<keyword id="KW-0472">Membrane</keyword>
<keyword id="KW-0496">Mitochondrion</keyword>
<keyword id="KW-0999">Mitochondrion inner membrane</keyword>
<keyword id="KW-1185">Reference proteome</keyword>
<keyword id="KW-0809">Transit peptide</keyword>
<keyword id="KW-0813">Transport</keyword>
<gene>
    <name evidence="3" type="primary">atp5f1c</name>
    <name type="synonym">atp5C1</name>
    <name type="ORF">DDB_G0292306</name>
</gene>
<evidence type="ECO:0000250" key="1">
    <source>
        <dbReference type="UniProtKB" id="P05631"/>
    </source>
</evidence>
<evidence type="ECO:0000250" key="2">
    <source>
        <dbReference type="UniProtKB" id="P19483"/>
    </source>
</evidence>
<evidence type="ECO:0000250" key="3">
    <source>
        <dbReference type="UniProtKB" id="P36542"/>
    </source>
</evidence>
<evidence type="ECO:0000305" key="4"/>
<dbReference type="EMBL" id="AAFI02000189">
    <property type="protein sequence ID" value="EAL61277.1"/>
    <property type="molecule type" value="Genomic_DNA"/>
</dbReference>
<dbReference type="RefSeq" id="XP_629690.1">
    <property type="nucleotide sequence ID" value="XM_629688.1"/>
</dbReference>
<dbReference type="SMR" id="Q54DF1"/>
<dbReference type="BioGRID" id="1253609">
    <property type="interactions" value="1"/>
</dbReference>
<dbReference type="FunCoup" id="Q54DF1">
    <property type="interactions" value="645"/>
</dbReference>
<dbReference type="STRING" id="44689.Q54DF1"/>
<dbReference type="PaxDb" id="44689-DDB0237782"/>
<dbReference type="EnsemblProtists" id="EAL61277">
    <property type="protein sequence ID" value="EAL61277"/>
    <property type="gene ID" value="DDB_G0292306"/>
</dbReference>
<dbReference type="GeneID" id="8628606"/>
<dbReference type="KEGG" id="ddi:DDB_G0292306"/>
<dbReference type="dictyBase" id="DDB_G0292306">
    <property type="gene designation" value="atp5C1"/>
</dbReference>
<dbReference type="VEuPathDB" id="AmoebaDB:DDB_G0292306"/>
<dbReference type="eggNOG" id="KOG1531">
    <property type="taxonomic scope" value="Eukaryota"/>
</dbReference>
<dbReference type="HOGENOM" id="CLU_050669_4_0_1"/>
<dbReference type="InParanoid" id="Q54DF1"/>
<dbReference type="OMA" id="MQITSAM"/>
<dbReference type="PhylomeDB" id="Q54DF1"/>
<dbReference type="Reactome" id="R-DDI-9837999">
    <property type="pathway name" value="Mitochondrial protein degradation"/>
</dbReference>
<dbReference type="PRO" id="PR:Q54DF1"/>
<dbReference type="Proteomes" id="UP000002195">
    <property type="component" value="Chromosome 6"/>
</dbReference>
<dbReference type="GO" id="GO:0005743">
    <property type="term" value="C:mitochondrial inner membrane"/>
    <property type="evidence" value="ECO:0007669"/>
    <property type="project" value="UniProtKB-SubCell"/>
</dbReference>
<dbReference type="GO" id="GO:0045335">
    <property type="term" value="C:phagocytic vesicle"/>
    <property type="evidence" value="ECO:0007005"/>
    <property type="project" value="dictyBase"/>
</dbReference>
<dbReference type="GO" id="GO:0045259">
    <property type="term" value="C:proton-transporting ATP synthase complex"/>
    <property type="evidence" value="ECO:0000250"/>
    <property type="project" value="dictyBase"/>
</dbReference>
<dbReference type="GO" id="GO:0046933">
    <property type="term" value="F:proton-transporting ATP synthase activity, rotational mechanism"/>
    <property type="evidence" value="ECO:0007669"/>
    <property type="project" value="InterPro"/>
</dbReference>
<dbReference type="GO" id="GO:0015986">
    <property type="term" value="P:proton motive force-driven ATP synthesis"/>
    <property type="evidence" value="ECO:0000318"/>
    <property type="project" value="GO_Central"/>
</dbReference>
<dbReference type="CDD" id="cd12151">
    <property type="entry name" value="F1-ATPase_gamma"/>
    <property type="match status" value="1"/>
</dbReference>
<dbReference type="FunFam" id="1.10.287.80:FF:000019">
    <property type="entry name" value="ATP synthase gamma chain"/>
    <property type="match status" value="1"/>
</dbReference>
<dbReference type="Gene3D" id="3.40.1380.10">
    <property type="match status" value="1"/>
</dbReference>
<dbReference type="Gene3D" id="1.10.287.80">
    <property type="entry name" value="ATP synthase, gamma subunit, helix hairpin domain"/>
    <property type="match status" value="1"/>
</dbReference>
<dbReference type="InterPro" id="IPR035968">
    <property type="entry name" value="ATP_synth_F1_ATPase_gsu"/>
</dbReference>
<dbReference type="InterPro" id="IPR000131">
    <property type="entry name" value="ATP_synth_F1_gsu"/>
</dbReference>
<dbReference type="InterPro" id="IPR023632">
    <property type="entry name" value="ATP_synth_F1_gsu_CS"/>
</dbReference>
<dbReference type="NCBIfam" id="TIGR01146">
    <property type="entry name" value="ATPsyn_F1gamma"/>
    <property type="match status" value="1"/>
</dbReference>
<dbReference type="PANTHER" id="PTHR11693">
    <property type="entry name" value="ATP SYNTHASE GAMMA CHAIN"/>
    <property type="match status" value="1"/>
</dbReference>
<dbReference type="PANTHER" id="PTHR11693:SF22">
    <property type="entry name" value="ATP SYNTHASE SUBUNIT GAMMA, MITOCHONDRIAL"/>
    <property type="match status" value="1"/>
</dbReference>
<dbReference type="Pfam" id="PF00231">
    <property type="entry name" value="ATP-synt"/>
    <property type="match status" value="1"/>
</dbReference>
<dbReference type="PRINTS" id="PR00126">
    <property type="entry name" value="ATPASEGAMMA"/>
</dbReference>
<dbReference type="SUPFAM" id="SSF52943">
    <property type="entry name" value="ATP synthase (F1-ATPase), gamma subunit"/>
    <property type="match status" value="1"/>
</dbReference>
<dbReference type="PROSITE" id="PS00153">
    <property type="entry name" value="ATPASE_GAMMA"/>
    <property type="match status" value="1"/>
</dbReference>
<organism>
    <name type="scientific">Dictyostelium discoideum</name>
    <name type="common">Social amoeba</name>
    <dbReference type="NCBI Taxonomy" id="44689"/>
    <lineage>
        <taxon>Eukaryota</taxon>
        <taxon>Amoebozoa</taxon>
        <taxon>Evosea</taxon>
        <taxon>Eumycetozoa</taxon>
        <taxon>Dictyostelia</taxon>
        <taxon>Dictyosteliales</taxon>
        <taxon>Dictyosteliaceae</taxon>
        <taxon>Dictyostelium</taxon>
    </lineage>
</organism>
<name>ATPG_DICDI</name>
<protein>
    <recommendedName>
        <fullName evidence="3">ATP synthase F(1) complex subunit gamma, mitochondrial</fullName>
    </recommendedName>
    <alternativeName>
        <fullName evidence="3">ATP synthase F1 subunit gamma</fullName>
    </alternativeName>
    <alternativeName>
        <fullName>F-ATPase gamma subunit</fullName>
    </alternativeName>
</protein>
<sequence>MNSASKLFVVLASPANQRNMATLKDLKIRLGTVKTISKLTKTLHMVASSKLRSAEKKAEESGPYSVGPQKVLGVVETADAFNTATEPIEDRSNKQLLIAITTDTGMCGPVNHQIIKTIKALLKDDAKQEILVSTTGLKGVAPIVADFPNQFLINGRDFGKADYSFPEVLLFLNEIISKVPNYDSALVVYNKFKNALSYSVDRQFIPGFNLLELNRDKFYEYTTSEDRAATMKDLSEFYLASSLWTGLYQNRASEMAARMVAMDNASKNGESISQALGLQYNRARQAMITSELIEIVSGASAIESSD</sequence>
<feature type="transit peptide" description="Mitochondrion">
    <location>
        <begin position="1"/>
        <end position="17"/>
    </location>
</feature>
<feature type="chain" id="PRO_0000328029" description="ATP synthase F(1) complex subunit gamma, mitochondrial">
    <location>
        <begin position="18"/>
        <end position="306"/>
    </location>
</feature>
<comment type="function">
    <text evidence="2 3">Subunit gamma, of the mitochondrial membrane ATP synthase complex (F(1)F(0) ATP synthase or Complex V) that produces ATP from ADP in the presence of a proton gradient across the membrane which is generated by electron transport complexes of the respiratory chain. ATP synthase complex consist of a soluble F(1) head domain - the catalytic core - and a membrane F(1) domain - the membrane proton channel. These two domains are linked by a central stalk rotating inside the F(1) region and a stationary peripheral stalk. During catalysis, ATP synthesis in the catalytic domain of F(1) is coupled via a rotary mechanism of the central stalk subunits to proton translocation (By similarity). In vivo, can only synthesize ATP although its ATP hydrolase activity can be activated artificially in vitro (By similarity). With the central stalk subunit delta, is essential for the biogenesis of F(1) catalytic part of the ATP synthase complex namely in the formation of F1 assembly intermediate (By similarity).</text>
</comment>
<comment type="subunit">
    <text evidence="3">Component of the ATP synthase complex composed at least of ATP5F1A/subunit alpha, ATP5F1B/subunit beta, ATP5MC1/subunit c (homooctomer), MT-ATP6/subunit a, MT-ATP8/subunit 8, ATP5ME/subunit e, ATP5MF/subunit f, ATP5MG/subunit g, ATP5MK/subunit k, ATP5MJ/subunit j, ATP5F1C/subunit gamma, ATP5F1D/subunit delta, ATP5F1E/subunit epsilon, ATP5PF/subunit F6, ATP5PB/subunit b, ATP5PD/subunit d, ATP5PO/subunit OSCP. ATP synthase complex consists of a soluble F(1) head domain (subunits alpha(3) and beta(3)) - the catalytic core - and a membrane F(0) domain - the membrane proton channel (subunits c, a, 8, e, f, g, k and j). These two domains are linked by a central stalk (subunits gamma, delta, and epsilon) rotating inside the F1 region and a stationary peripheral stalk (subunits F6, b, d, and OSCP).</text>
</comment>
<comment type="subcellular location">
    <subcellularLocation>
        <location evidence="1">Mitochondrion inner membrane</location>
        <topology evidence="1">Peripheral membrane protein</topology>
        <orientation evidence="1">Matrix side</orientation>
    </subcellularLocation>
</comment>
<comment type="similarity">
    <text evidence="4">Belongs to the ATPase gamma chain family.</text>
</comment>
<proteinExistence type="evidence at protein level"/>
<accession>Q54DF1</accession>